<name>HSLO_YERPA</name>
<comment type="function">
    <text evidence="1">Redox regulated molecular chaperone. Protects both thermally unfolding and oxidatively damaged proteins from irreversible aggregation. Plays an important role in the bacterial defense system toward oxidative stress.</text>
</comment>
<comment type="subcellular location">
    <subcellularLocation>
        <location evidence="1">Cytoplasm</location>
    </subcellularLocation>
</comment>
<comment type="PTM">
    <text evidence="1">Under oxidizing conditions two disulfide bonds are formed involving the reactive cysteines. Under reducing conditions zinc is bound to the reactive cysteines and the protein is inactive.</text>
</comment>
<comment type="similarity">
    <text evidence="1">Belongs to the HSP33 family.</text>
</comment>
<evidence type="ECO:0000255" key="1">
    <source>
        <dbReference type="HAMAP-Rule" id="MF_00117"/>
    </source>
</evidence>
<organism>
    <name type="scientific">Yersinia pestis bv. Antiqua (strain Antiqua)</name>
    <dbReference type="NCBI Taxonomy" id="360102"/>
    <lineage>
        <taxon>Bacteria</taxon>
        <taxon>Pseudomonadati</taxon>
        <taxon>Pseudomonadota</taxon>
        <taxon>Gammaproteobacteria</taxon>
        <taxon>Enterobacterales</taxon>
        <taxon>Yersiniaceae</taxon>
        <taxon>Yersinia</taxon>
    </lineage>
</organism>
<feature type="chain" id="PRO_1000015594" description="33 kDa chaperonin">
    <location>
        <begin position="1"/>
        <end position="293"/>
    </location>
</feature>
<feature type="disulfide bond" description="Redox-active" evidence="1">
    <location>
        <begin position="231"/>
        <end position="233"/>
    </location>
</feature>
<feature type="disulfide bond" description="Redox-active" evidence="1">
    <location>
        <begin position="264"/>
        <end position="267"/>
    </location>
</feature>
<dbReference type="EMBL" id="CP000308">
    <property type="protein sequence ID" value="ABG15292.1"/>
    <property type="molecule type" value="Genomic_DNA"/>
</dbReference>
<dbReference type="RefSeq" id="WP_002208911.1">
    <property type="nucleotide sequence ID" value="NZ_CP009906.1"/>
</dbReference>
<dbReference type="SMR" id="Q1C2N0"/>
<dbReference type="GeneID" id="57974461"/>
<dbReference type="KEGG" id="ypa:YPA_3330"/>
<dbReference type="Proteomes" id="UP000001971">
    <property type="component" value="Chromosome"/>
</dbReference>
<dbReference type="GO" id="GO:0005737">
    <property type="term" value="C:cytoplasm"/>
    <property type="evidence" value="ECO:0007669"/>
    <property type="project" value="UniProtKB-SubCell"/>
</dbReference>
<dbReference type="GO" id="GO:0044183">
    <property type="term" value="F:protein folding chaperone"/>
    <property type="evidence" value="ECO:0007669"/>
    <property type="project" value="TreeGrafter"/>
</dbReference>
<dbReference type="GO" id="GO:0051082">
    <property type="term" value="F:unfolded protein binding"/>
    <property type="evidence" value="ECO:0007669"/>
    <property type="project" value="UniProtKB-UniRule"/>
</dbReference>
<dbReference type="GO" id="GO:0042026">
    <property type="term" value="P:protein refolding"/>
    <property type="evidence" value="ECO:0007669"/>
    <property type="project" value="TreeGrafter"/>
</dbReference>
<dbReference type="CDD" id="cd00498">
    <property type="entry name" value="Hsp33"/>
    <property type="match status" value="1"/>
</dbReference>
<dbReference type="Gene3D" id="1.10.287.480">
    <property type="entry name" value="helix hairpin bin"/>
    <property type="match status" value="1"/>
</dbReference>
<dbReference type="Gene3D" id="3.55.30.10">
    <property type="entry name" value="Hsp33 domain"/>
    <property type="match status" value="1"/>
</dbReference>
<dbReference type="Gene3D" id="3.90.1280.10">
    <property type="entry name" value="HSP33 redox switch-like"/>
    <property type="match status" value="1"/>
</dbReference>
<dbReference type="HAMAP" id="MF_00117">
    <property type="entry name" value="HslO"/>
    <property type="match status" value="1"/>
</dbReference>
<dbReference type="InterPro" id="IPR000397">
    <property type="entry name" value="Heat_shock_Hsp33"/>
</dbReference>
<dbReference type="InterPro" id="IPR016154">
    <property type="entry name" value="Heat_shock_Hsp33_C"/>
</dbReference>
<dbReference type="InterPro" id="IPR016153">
    <property type="entry name" value="Heat_shock_Hsp33_N"/>
</dbReference>
<dbReference type="InterPro" id="IPR023212">
    <property type="entry name" value="Hsp33_helix_hairpin_bin_dom_sf"/>
</dbReference>
<dbReference type="NCBIfam" id="NF001033">
    <property type="entry name" value="PRK00114.1"/>
    <property type="match status" value="1"/>
</dbReference>
<dbReference type="PANTHER" id="PTHR30111">
    <property type="entry name" value="33 KDA CHAPERONIN"/>
    <property type="match status" value="1"/>
</dbReference>
<dbReference type="PANTHER" id="PTHR30111:SF1">
    <property type="entry name" value="33 KDA CHAPERONIN"/>
    <property type="match status" value="1"/>
</dbReference>
<dbReference type="Pfam" id="PF01430">
    <property type="entry name" value="HSP33"/>
    <property type="match status" value="1"/>
</dbReference>
<dbReference type="PIRSF" id="PIRSF005261">
    <property type="entry name" value="Heat_shock_Hsp33"/>
    <property type="match status" value="1"/>
</dbReference>
<dbReference type="SUPFAM" id="SSF64397">
    <property type="entry name" value="Hsp33 domain"/>
    <property type="match status" value="1"/>
</dbReference>
<dbReference type="SUPFAM" id="SSF118352">
    <property type="entry name" value="HSP33 redox switch-like"/>
    <property type="match status" value="1"/>
</dbReference>
<sequence length="293" mass="32478">MSNHDQLHRYLFANHAVRGELVSVNETYQQVLANHDYPPAVQKLLGEMLVATSLLTATLKFDGDITVQLQGGDGPLTLAVINGNNRQEMRGVARVKGEISDDSTLQEMVGNGYLVITITPAQGERYQGVVALEGETIAACLENYFMQSEQLPTRLFIRTGHVADKAAAGGMLLQVLPAQERNEDEFDHLAQLTATIKAEELFTLPANEVLYRLYHQEEVTLYEPQNVSFRCTCSRQRCADALVTLADDDVTEMLEQDGNIDMHCEYCGNHYLFDAVDIATLKNGNSASSEQIH</sequence>
<keyword id="KW-0143">Chaperone</keyword>
<keyword id="KW-0963">Cytoplasm</keyword>
<keyword id="KW-1015">Disulfide bond</keyword>
<keyword id="KW-0676">Redox-active center</keyword>
<keyword id="KW-0862">Zinc</keyword>
<protein>
    <recommendedName>
        <fullName evidence="1">33 kDa chaperonin</fullName>
    </recommendedName>
    <alternativeName>
        <fullName evidence="1">Heat shock protein 33 homolog</fullName>
        <shortName evidence="1">HSP33</shortName>
    </alternativeName>
</protein>
<gene>
    <name evidence="1" type="primary">hslO</name>
    <name type="ordered locus">YPA_3330</name>
</gene>
<reference key="1">
    <citation type="journal article" date="2006" name="J. Bacteriol.">
        <title>Complete genome sequence of Yersinia pestis strains Antiqua and Nepal516: evidence of gene reduction in an emerging pathogen.</title>
        <authorList>
            <person name="Chain P.S.G."/>
            <person name="Hu P."/>
            <person name="Malfatti S.A."/>
            <person name="Radnedge L."/>
            <person name="Larimer F."/>
            <person name="Vergez L.M."/>
            <person name="Worsham P."/>
            <person name="Chu M.C."/>
            <person name="Andersen G.L."/>
        </authorList>
    </citation>
    <scope>NUCLEOTIDE SEQUENCE [LARGE SCALE GENOMIC DNA]</scope>
    <source>
        <strain>Antiqua</strain>
    </source>
</reference>
<proteinExistence type="inferred from homology"/>
<accession>Q1C2N0</accession>